<name>PHS_PSET1</name>
<gene>
    <name type="ordered locus">PSHAa2042</name>
</gene>
<accession>Q3IIZ3</accession>
<keyword id="KW-0456">Lyase</keyword>
<keyword id="KW-1185">Reference proteome</keyword>
<evidence type="ECO:0000255" key="1">
    <source>
        <dbReference type="HAMAP-Rule" id="MF_00434"/>
    </source>
</evidence>
<protein>
    <recommendedName>
        <fullName evidence="1">Putative pterin-4-alpha-carbinolamine dehydratase</fullName>
        <shortName evidence="1">PHS</shortName>
        <ecNumber evidence="1">4.2.1.96</ecNumber>
    </recommendedName>
    <alternativeName>
        <fullName evidence="1">4-alpha-hydroxy-tetrahydropterin dehydratase</fullName>
    </alternativeName>
    <alternativeName>
        <fullName evidence="1">Pterin carbinolamine dehydratase</fullName>
        <shortName evidence="1">PCD</shortName>
    </alternativeName>
</protein>
<feature type="chain" id="PRO_0000231463" description="Putative pterin-4-alpha-carbinolamine dehydratase">
    <location>
        <begin position="1"/>
        <end position="114"/>
    </location>
</feature>
<proteinExistence type="inferred from homology"/>
<reference key="1">
    <citation type="journal article" date="2005" name="Genome Res.">
        <title>Coping with cold: the genome of the versatile marine Antarctica bacterium Pseudoalteromonas haloplanktis TAC125.</title>
        <authorList>
            <person name="Medigue C."/>
            <person name="Krin E."/>
            <person name="Pascal G."/>
            <person name="Barbe V."/>
            <person name="Bernsel A."/>
            <person name="Bertin P.N."/>
            <person name="Cheung F."/>
            <person name="Cruveiller S."/>
            <person name="D'Amico S."/>
            <person name="Duilio A."/>
            <person name="Fang G."/>
            <person name="Feller G."/>
            <person name="Ho C."/>
            <person name="Mangenot S."/>
            <person name="Marino G."/>
            <person name="Nilsson J."/>
            <person name="Parrilli E."/>
            <person name="Rocha E.P.C."/>
            <person name="Rouy Z."/>
            <person name="Sekowska A."/>
            <person name="Tutino M.L."/>
            <person name="Vallenet D."/>
            <person name="von Heijne G."/>
            <person name="Danchin A."/>
        </authorList>
    </citation>
    <scope>NUCLEOTIDE SEQUENCE [LARGE SCALE GENOMIC DNA]</scope>
    <source>
        <strain>TAC 125</strain>
    </source>
</reference>
<comment type="catalytic activity">
    <reaction evidence="1">
        <text>(4aS,6R)-4a-hydroxy-L-erythro-5,6,7,8-tetrahydrobiopterin = (6R)-L-erythro-6,7-dihydrobiopterin + H2O</text>
        <dbReference type="Rhea" id="RHEA:11920"/>
        <dbReference type="ChEBI" id="CHEBI:15377"/>
        <dbReference type="ChEBI" id="CHEBI:15642"/>
        <dbReference type="ChEBI" id="CHEBI:43120"/>
        <dbReference type="EC" id="4.2.1.96"/>
    </reaction>
</comment>
<comment type="similarity">
    <text evidence="1">Belongs to the pterin-4-alpha-carbinolamine dehydratase family.</text>
</comment>
<dbReference type="EC" id="4.2.1.96" evidence="1"/>
<dbReference type="EMBL" id="CR954246">
    <property type="protein sequence ID" value="CAI87098.1"/>
    <property type="molecule type" value="Genomic_DNA"/>
</dbReference>
<dbReference type="SMR" id="Q3IIZ3"/>
<dbReference type="STRING" id="326442.PSHAa2042"/>
<dbReference type="KEGG" id="pha:PSHAa2042"/>
<dbReference type="eggNOG" id="COG2154">
    <property type="taxonomic scope" value="Bacteria"/>
</dbReference>
<dbReference type="HOGENOM" id="CLU_081974_2_2_6"/>
<dbReference type="BioCyc" id="PHAL326442:PSHA_RS10090-MONOMER"/>
<dbReference type="Proteomes" id="UP000006843">
    <property type="component" value="Chromosome I"/>
</dbReference>
<dbReference type="GO" id="GO:0008124">
    <property type="term" value="F:4-alpha-hydroxytetrahydrobiopterin dehydratase activity"/>
    <property type="evidence" value="ECO:0007669"/>
    <property type="project" value="UniProtKB-UniRule"/>
</dbReference>
<dbReference type="GO" id="GO:0006729">
    <property type="term" value="P:tetrahydrobiopterin biosynthetic process"/>
    <property type="evidence" value="ECO:0007669"/>
    <property type="project" value="InterPro"/>
</dbReference>
<dbReference type="CDD" id="cd00913">
    <property type="entry name" value="PCD_DCoH_subfamily_a"/>
    <property type="match status" value="1"/>
</dbReference>
<dbReference type="Gene3D" id="3.30.1360.20">
    <property type="entry name" value="Transcriptional coactivator/pterin dehydratase"/>
    <property type="match status" value="1"/>
</dbReference>
<dbReference type="HAMAP" id="MF_00434">
    <property type="entry name" value="Pterin_4_alpha"/>
    <property type="match status" value="1"/>
</dbReference>
<dbReference type="InterPro" id="IPR036428">
    <property type="entry name" value="PCD_sf"/>
</dbReference>
<dbReference type="InterPro" id="IPR050376">
    <property type="entry name" value="Pterin-4-alpha-carb_dehyd"/>
</dbReference>
<dbReference type="InterPro" id="IPR001533">
    <property type="entry name" value="Pterin_deHydtase"/>
</dbReference>
<dbReference type="NCBIfam" id="NF002016">
    <property type="entry name" value="PRK00823.1-1"/>
    <property type="match status" value="1"/>
</dbReference>
<dbReference type="PANTHER" id="PTHR42805">
    <property type="entry name" value="PTERIN-4-ALPHA-CARBINOLAMINE DEHYDRATASE-RELATED"/>
    <property type="match status" value="1"/>
</dbReference>
<dbReference type="PANTHER" id="PTHR42805:SF1">
    <property type="entry name" value="PTERIN-4-ALPHA-CARBINOLAMINE DEHYDRATASE-RELATED"/>
    <property type="match status" value="1"/>
</dbReference>
<dbReference type="Pfam" id="PF01329">
    <property type="entry name" value="Pterin_4a"/>
    <property type="match status" value="1"/>
</dbReference>
<dbReference type="SUPFAM" id="SSF55248">
    <property type="entry name" value="PCD-like"/>
    <property type="match status" value="1"/>
</dbReference>
<organism>
    <name type="scientific">Pseudoalteromonas translucida (strain TAC 125)</name>
    <dbReference type="NCBI Taxonomy" id="326442"/>
    <lineage>
        <taxon>Bacteria</taxon>
        <taxon>Pseudomonadati</taxon>
        <taxon>Pseudomonadota</taxon>
        <taxon>Gammaproteobacteria</taxon>
        <taxon>Alteromonadales</taxon>
        <taxon>Pseudoalteromonadaceae</taxon>
        <taxon>Pseudoalteromonas</taxon>
    </lineage>
</organism>
<sequence length="114" mass="12830">MSSLSAQKCEACHADAPKVSDEELAQLITKIPDWVPEVRDGIMQLERVYKFKNFKQAIAFTNKVGDMAEDEGHHPGLLTEWGKVTVTWWSHSIKGLHKNDFICAAKTDDVFNAL</sequence>